<keyword id="KW-0030">Aminoacyl-tRNA synthetase</keyword>
<keyword id="KW-0067">ATP-binding</keyword>
<keyword id="KW-0963">Cytoplasm</keyword>
<keyword id="KW-0436">Ligase</keyword>
<keyword id="KW-0547">Nucleotide-binding</keyword>
<keyword id="KW-0648">Protein biosynthesis</keyword>
<keyword id="KW-1185">Reference proteome</keyword>
<organism>
    <name type="scientific">Crocosphaera subtropica (strain ATCC 51142 / BH68)</name>
    <name type="common">Cyanothece sp. (strain ATCC 51142)</name>
    <dbReference type="NCBI Taxonomy" id="43989"/>
    <lineage>
        <taxon>Bacteria</taxon>
        <taxon>Bacillati</taxon>
        <taxon>Cyanobacteriota</taxon>
        <taxon>Cyanophyceae</taxon>
        <taxon>Oscillatoriophycideae</taxon>
        <taxon>Chroococcales</taxon>
        <taxon>Aphanothecaceae</taxon>
        <taxon>Crocosphaera</taxon>
        <taxon>Crocosphaera subtropica</taxon>
    </lineage>
</organism>
<feature type="chain" id="PRO_1000095357" description="Arginine--tRNA ligase">
    <location>
        <begin position="1"/>
        <end position="585"/>
    </location>
</feature>
<feature type="short sequence motif" description="'HIGH' region">
    <location>
        <begin position="126"/>
        <end position="136"/>
    </location>
</feature>
<protein>
    <recommendedName>
        <fullName evidence="1">Arginine--tRNA ligase</fullName>
        <ecNumber evidence="1">6.1.1.19</ecNumber>
    </recommendedName>
    <alternativeName>
        <fullName evidence="1">Arginyl-tRNA synthetase</fullName>
        <shortName evidence="1">ArgRS</shortName>
    </alternativeName>
</protein>
<reference key="1">
    <citation type="journal article" date="2008" name="Proc. Natl. Acad. Sci. U.S.A.">
        <title>The genome of Cyanothece 51142, a unicellular diazotrophic cyanobacterium important in the marine nitrogen cycle.</title>
        <authorList>
            <person name="Welsh E.A."/>
            <person name="Liberton M."/>
            <person name="Stoeckel J."/>
            <person name="Loh T."/>
            <person name="Elvitigala T."/>
            <person name="Wang C."/>
            <person name="Wollam A."/>
            <person name="Fulton R.S."/>
            <person name="Clifton S.W."/>
            <person name="Jacobs J.M."/>
            <person name="Aurora R."/>
            <person name="Ghosh B.K."/>
            <person name="Sherman L.A."/>
            <person name="Smith R.D."/>
            <person name="Wilson R.K."/>
            <person name="Pakrasi H.B."/>
        </authorList>
    </citation>
    <scope>NUCLEOTIDE SEQUENCE [LARGE SCALE GENOMIC DNA]</scope>
    <source>
        <strain>ATCC 51142 / BH68</strain>
    </source>
</reference>
<sequence length="585" mass="66577">MTSINEQLTQKFQDALVKSFGEEFKDVDPQVNLARDLRHGDYQANIALPLAKKLGKNPREIAQIIINNLSLNTICENPTIGGPGFINLKLKSSYLETQLKSLYQNQRLGIEKVHNADKVIVDFSSPNIAKEMHVGHLRSTIIGDCIARTLEFLGYEVLRLNHVGDWGTQFGMLITYLKEVYPDALTQADVLEIGDLVNFYKQAKKRFDEDPKFQEAAREAVVKLQSGDEESRKAWQLLCDQSRREFQKIYDRLDVKLIERGESFYNPYLNDVIKALDEQGILEKDQGAQCVFLEGFTNKSGDPLPLIVQKSDGGYNYATTDLAALKYRIQEDKAKRIIYVTDAGQSNHFAQVFQVAKKANFLPDTVDVTHVPFGLVKGEDGKKLKTRSGETVKLKDLLDEAVNYARKDLENRLQAEDRKESEDFINHVAETVGISAVKYADLSQNRISDYIFSYDKMLALQGNTAPYMLYAYARIQSISREGNIDYENLGENIQILLKEDTEIELGKYLLQLNETIKEVEKSLLPNRLCDYLYELSKKFNRFYENCPVLKSDEPVKTSRLLLCDLTARTLKLGLSLLGISVLERM</sequence>
<name>SYR_CROS5</name>
<proteinExistence type="inferred from homology"/>
<comment type="catalytic activity">
    <reaction evidence="1">
        <text>tRNA(Arg) + L-arginine + ATP = L-arginyl-tRNA(Arg) + AMP + diphosphate</text>
        <dbReference type="Rhea" id="RHEA:20301"/>
        <dbReference type="Rhea" id="RHEA-COMP:9658"/>
        <dbReference type="Rhea" id="RHEA-COMP:9673"/>
        <dbReference type="ChEBI" id="CHEBI:30616"/>
        <dbReference type="ChEBI" id="CHEBI:32682"/>
        <dbReference type="ChEBI" id="CHEBI:33019"/>
        <dbReference type="ChEBI" id="CHEBI:78442"/>
        <dbReference type="ChEBI" id="CHEBI:78513"/>
        <dbReference type="ChEBI" id="CHEBI:456215"/>
        <dbReference type="EC" id="6.1.1.19"/>
    </reaction>
</comment>
<comment type="subunit">
    <text evidence="1">Monomer.</text>
</comment>
<comment type="subcellular location">
    <subcellularLocation>
        <location evidence="1">Cytoplasm</location>
    </subcellularLocation>
</comment>
<comment type="similarity">
    <text evidence="1">Belongs to the class-I aminoacyl-tRNA synthetase family.</text>
</comment>
<evidence type="ECO:0000255" key="1">
    <source>
        <dbReference type="HAMAP-Rule" id="MF_00123"/>
    </source>
</evidence>
<accession>B1X0N5</accession>
<gene>
    <name evidence="1" type="primary">argS</name>
    <name type="ordered locus">cce_3576</name>
</gene>
<dbReference type="EC" id="6.1.1.19" evidence="1"/>
<dbReference type="EMBL" id="CP000806">
    <property type="protein sequence ID" value="ACB52924.1"/>
    <property type="molecule type" value="Genomic_DNA"/>
</dbReference>
<dbReference type="RefSeq" id="WP_009545260.1">
    <property type="nucleotide sequence ID" value="NC_010546.1"/>
</dbReference>
<dbReference type="SMR" id="B1X0N5"/>
<dbReference type="STRING" id="43989.cce_3576"/>
<dbReference type="KEGG" id="cyt:cce_3576"/>
<dbReference type="eggNOG" id="COG0018">
    <property type="taxonomic scope" value="Bacteria"/>
</dbReference>
<dbReference type="HOGENOM" id="CLU_006406_5_1_3"/>
<dbReference type="OrthoDB" id="9805987at2"/>
<dbReference type="Proteomes" id="UP000001203">
    <property type="component" value="Chromosome circular"/>
</dbReference>
<dbReference type="GO" id="GO:0005737">
    <property type="term" value="C:cytoplasm"/>
    <property type="evidence" value="ECO:0007669"/>
    <property type="project" value="UniProtKB-SubCell"/>
</dbReference>
<dbReference type="GO" id="GO:0004814">
    <property type="term" value="F:arginine-tRNA ligase activity"/>
    <property type="evidence" value="ECO:0007669"/>
    <property type="project" value="UniProtKB-UniRule"/>
</dbReference>
<dbReference type="GO" id="GO:0005524">
    <property type="term" value="F:ATP binding"/>
    <property type="evidence" value="ECO:0007669"/>
    <property type="project" value="UniProtKB-UniRule"/>
</dbReference>
<dbReference type="GO" id="GO:0006420">
    <property type="term" value="P:arginyl-tRNA aminoacylation"/>
    <property type="evidence" value="ECO:0007669"/>
    <property type="project" value="UniProtKB-UniRule"/>
</dbReference>
<dbReference type="CDD" id="cd07956">
    <property type="entry name" value="Anticodon_Ia_Arg"/>
    <property type="match status" value="1"/>
</dbReference>
<dbReference type="CDD" id="cd00671">
    <property type="entry name" value="ArgRS_core"/>
    <property type="match status" value="1"/>
</dbReference>
<dbReference type="FunFam" id="1.10.730.10:FF:000008">
    <property type="entry name" value="Arginine--tRNA ligase"/>
    <property type="match status" value="1"/>
</dbReference>
<dbReference type="FunFam" id="3.40.50.620:FF:000030">
    <property type="entry name" value="Arginine--tRNA ligase"/>
    <property type="match status" value="1"/>
</dbReference>
<dbReference type="Gene3D" id="3.30.1360.70">
    <property type="entry name" value="Arginyl tRNA synthetase N-terminal domain"/>
    <property type="match status" value="1"/>
</dbReference>
<dbReference type="Gene3D" id="3.40.50.620">
    <property type="entry name" value="HUPs"/>
    <property type="match status" value="1"/>
</dbReference>
<dbReference type="Gene3D" id="1.10.730.10">
    <property type="entry name" value="Isoleucyl-tRNA Synthetase, Domain 1"/>
    <property type="match status" value="1"/>
</dbReference>
<dbReference type="HAMAP" id="MF_00123">
    <property type="entry name" value="Arg_tRNA_synth"/>
    <property type="match status" value="1"/>
</dbReference>
<dbReference type="InterPro" id="IPR001412">
    <property type="entry name" value="aa-tRNA-synth_I_CS"/>
</dbReference>
<dbReference type="InterPro" id="IPR001278">
    <property type="entry name" value="Arg-tRNA-ligase"/>
</dbReference>
<dbReference type="InterPro" id="IPR005148">
    <property type="entry name" value="Arg-tRNA-synth_N"/>
</dbReference>
<dbReference type="InterPro" id="IPR036695">
    <property type="entry name" value="Arg-tRNA-synth_N_sf"/>
</dbReference>
<dbReference type="InterPro" id="IPR035684">
    <property type="entry name" value="ArgRS_core"/>
</dbReference>
<dbReference type="InterPro" id="IPR008909">
    <property type="entry name" value="DALR_anticod-bd"/>
</dbReference>
<dbReference type="InterPro" id="IPR014729">
    <property type="entry name" value="Rossmann-like_a/b/a_fold"/>
</dbReference>
<dbReference type="InterPro" id="IPR009080">
    <property type="entry name" value="tRNAsynth_Ia_anticodon-bd"/>
</dbReference>
<dbReference type="NCBIfam" id="TIGR00456">
    <property type="entry name" value="argS"/>
    <property type="match status" value="1"/>
</dbReference>
<dbReference type="PANTHER" id="PTHR11956:SF5">
    <property type="entry name" value="ARGININE--TRNA LIGASE, CYTOPLASMIC"/>
    <property type="match status" value="1"/>
</dbReference>
<dbReference type="PANTHER" id="PTHR11956">
    <property type="entry name" value="ARGINYL-TRNA SYNTHETASE"/>
    <property type="match status" value="1"/>
</dbReference>
<dbReference type="Pfam" id="PF03485">
    <property type="entry name" value="Arg_tRNA_synt_N"/>
    <property type="match status" value="1"/>
</dbReference>
<dbReference type="Pfam" id="PF05746">
    <property type="entry name" value="DALR_1"/>
    <property type="match status" value="1"/>
</dbReference>
<dbReference type="Pfam" id="PF00750">
    <property type="entry name" value="tRNA-synt_1d"/>
    <property type="match status" value="1"/>
</dbReference>
<dbReference type="PRINTS" id="PR01038">
    <property type="entry name" value="TRNASYNTHARG"/>
</dbReference>
<dbReference type="SMART" id="SM01016">
    <property type="entry name" value="Arg_tRNA_synt_N"/>
    <property type="match status" value="1"/>
</dbReference>
<dbReference type="SMART" id="SM00836">
    <property type="entry name" value="DALR_1"/>
    <property type="match status" value="1"/>
</dbReference>
<dbReference type="SUPFAM" id="SSF47323">
    <property type="entry name" value="Anticodon-binding domain of a subclass of class I aminoacyl-tRNA synthetases"/>
    <property type="match status" value="1"/>
</dbReference>
<dbReference type="SUPFAM" id="SSF55190">
    <property type="entry name" value="Arginyl-tRNA synthetase (ArgRS), N-terminal 'additional' domain"/>
    <property type="match status" value="1"/>
</dbReference>
<dbReference type="SUPFAM" id="SSF52374">
    <property type="entry name" value="Nucleotidylyl transferase"/>
    <property type="match status" value="1"/>
</dbReference>
<dbReference type="PROSITE" id="PS00178">
    <property type="entry name" value="AA_TRNA_LIGASE_I"/>
    <property type="match status" value="1"/>
</dbReference>